<sequence length="149" mass="16663">MPTRLTKTRKHRGNVSAGKGRIGKHRKHPGGRGKAGGQHHHRTNLDKYHPGYFGKVGMRYFHKQQNHFWRPEINLDKLWTLVDSEKKDEYLSKSSASAAPVIDTLAHGYGKVLGKGRLPEVPVIVKARFVSKLAEEKIRAVGGVVELVA</sequence>
<name>RL28_CANAL</name>
<reference key="1">
    <citation type="journal article" date="2004" name="Proc. Natl. Acad. Sci. U.S.A.">
        <title>The diploid genome sequence of Candida albicans.</title>
        <authorList>
            <person name="Jones T."/>
            <person name="Federspiel N.A."/>
            <person name="Chibana H."/>
            <person name="Dungan J."/>
            <person name="Kalman S."/>
            <person name="Magee B.B."/>
            <person name="Newport G."/>
            <person name="Thorstenson Y.R."/>
            <person name="Agabian N."/>
            <person name="Magee P.T."/>
            <person name="Davis R.W."/>
            <person name="Scherer S."/>
        </authorList>
    </citation>
    <scope>NUCLEOTIDE SEQUENCE [LARGE SCALE GENOMIC DNA]</scope>
    <source>
        <strain>SC5314 / ATCC MYA-2876</strain>
    </source>
</reference>
<reference key="2">
    <citation type="journal article" date="2007" name="Genome Biol.">
        <title>Assembly of the Candida albicans genome into sixteen supercontigs aligned on the eight chromosomes.</title>
        <authorList>
            <person name="van het Hoog M."/>
            <person name="Rast T.J."/>
            <person name="Martchenko M."/>
            <person name="Grindle S."/>
            <person name="Dignard D."/>
            <person name="Hogues H."/>
            <person name="Cuomo C."/>
            <person name="Berriman M."/>
            <person name="Scherer S."/>
            <person name="Magee B.B."/>
            <person name="Whiteway M."/>
            <person name="Chibana H."/>
            <person name="Nantel A."/>
            <person name="Magee P.T."/>
        </authorList>
    </citation>
    <scope>GENOME REANNOTATION</scope>
    <source>
        <strain>SC5314 / ATCC MYA-2876</strain>
    </source>
</reference>
<reference key="3">
    <citation type="journal article" date="2013" name="Genome Biol.">
        <title>Assembly of a phased diploid Candida albicans genome facilitates allele-specific measurements and provides a simple model for repeat and indel structure.</title>
        <authorList>
            <person name="Muzzey D."/>
            <person name="Schwartz K."/>
            <person name="Weissman J.S."/>
            <person name="Sherlock G."/>
        </authorList>
    </citation>
    <scope>NUCLEOTIDE SEQUENCE [LARGE SCALE GENOMIC DNA]</scope>
    <scope>GENOME REANNOTATION</scope>
    <source>
        <strain>SC5314 / ATCC MYA-2876</strain>
    </source>
</reference>
<reference evidence="6 7 8" key="4">
    <citation type="journal article" date="2022" name="Sci. Adv.">
        <title>E-site drug specificity of the human pathogen Candida albicans ribosome.</title>
        <authorList>
            <person name="Zgadzay Y."/>
            <person name="Kolosova O."/>
            <person name="Stetsenko A."/>
            <person name="Wu C."/>
            <person name="Bruchlen D."/>
            <person name="Usachev K."/>
            <person name="Validov S."/>
            <person name="Jenner L."/>
            <person name="Rogachev A."/>
            <person name="Yusupova G."/>
            <person name="Sachs M.S."/>
            <person name="Guskov A."/>
            <person name="Yusupov M."/>
        </authorList>
    </citation>
    <scope>STRUCTURE BY ELECTRON MICROSCOPY (2.32 ANGSTROMS) OF THE 80S RIBOSOME</scope>
    <scope>SUBUNIT</scope>
</reference>
<keyword id="KW-0002">3D-structure</keyword>
<keyword id="KW-0963">Cytoplasm</keyword>
<keyword id="KW-1185">Reference proteome</keyword>
<keyword id="KW-0687">Ribonucleoprotein</keyword>
<keyword id="KW-0689">Ribosomal protein</keyword>
<comment type="function">
    <text evidence="5">Component of the ribosome, a large ribonucleoprotein complex responsible for the synthesis of proteins in the cell. The small ribosomal subunit (SSU) binds messenger RNAs (mRNAs) and translates the encoded message by selecting cognate aminoacyl-transfer RNA (tRNA) molecules. The large subunit (LSU) contains the ribosomal catalytic site termed the peptidyl transferase center (PTC), which catalyzes the formation of peptide bonds, thereby polymerizing the amino acids delivered by tRNAs into a polypeptide chain. The nascent polypeptides leave the ribosome through a tunnel in the LSU and interact with protein factors that function in enzymatic processing, targeting, and the membrane insertion of nascent chains at the exit of the ribosomal tunnel.</text>
</comment>
<comment type="subunit">
    <text evidence="2">Component of the large ribosomal subunit (PubMed:35613268). Mature ribosomes consist of a small (40S) and a large (60S) subunit (PubMed:35613268). The 40S subunit contains about 32 different proteins and 1 molecule of RNA (18S) (PubMed:35613268). The 60S subunit contains 45 different proteins and 3 molecules of RNA (25S, 5.8S and 5S) (PubMed:35613268).</text>
</comment>
<comment type="subcellular location">
    <subcellularLocation>
        <location evidence="5">Cytoplasm</location>
    </subcellularLocation>
</comment>
<comment type="similarity">
    <text evidence="4">Belongs to the universal ribosomal protein uL15 family.</text>
</comment>
<evidence type="ECO:0000256" key="1">
    <source>
        <dbReference type="SAM" id="MobiDB-lite"/>
    </source>
</evidence>
<evidence type="ECO:0000269" key="2">
    <source>
    </source>
</evidence>
<evidence type="ECO:0000303" key="3">
    <source>
    </source>
</evidence>
<evidence type="ECO:0000305" key="4"/>
<evidence type="ECO:0000305" key="5">
    <source>
    </source>
</evidence>
<evidence type="ECO:0007744" key="6">
    <source>
        <dbReference type="PDB" id="7PZY"/>
    </source>
</evidence>
<evidence type="ECO:0007744" key="7">
    <source>
        <dbReference type="PDB" id="7Q0F"/>
    </source>
</evidence>
<evidence type="ECO:0007744" key="8">
    <source>
        <dbReference type="PDB" id="7Q0P"/>
    </source>
</evidence>
<feature type="chain" id="PRO_0000456531" description="Large ribosomal subunit protein uL15">
    <location>
        <begin position="1"/>
        <end position="149"/>
    </location>
</feature>
<feature type="region of interest" description="Disordered" evidence="1">
    <location>
        <begin position="1"/>
        <end position="44"/>
    </location>
</feature>
<feature type="compositionally biased region" description="Basic residues" evidence="1">
    <location>
        <begin position="1"/>
        <end position="13"/>
    </location>
</feature>
<feature type="compositionally biased region" description="Basic residues" evidence="1">
    <location>
        <begin position="21"/>
        <end position="42"/>
    </location>
</feature>
<gene>
    <name evidence="3" type="primary">RPL28</name>
    <name type="ordered locus">CAALFM_CR03030CA</name>
    <name type="ordered locus">orf19.2864.1</name>
</gene>
<organism>
    <name type="scientific">Candida albicans (strain SC5314 / ATCC MYA-2876)</name>
    <name type="common">Yeast</name>
    <dbReference type="NCBI Taxonomy" id="237561"/>
    <lineage>
        <taxon>Eukaryota</taxon>
        <taxon>Fungi</taxon>
        <taxon>Dikarya</taxon>
        <taxon>Ascomycota</taxon>
        <taxon>Saccharomycotina</taxon>
        <taxon>Pichiomycetes</taxon>
        <taxon>Debaryomycetaceae</taxon>
        <taxon>Candida/Lodderomyces clade</taxon>
        <taxon>Candida</taxon>
    </lineage>
</organism>
<dbReference type="EMBL" id="CP017630">
    <property type="protein sequence ID" value="AOW31042.1"/>
    <property type="molecule type" value="Genomic_DNA"/>
</dbReference>
<dbReference type="RefSeq" id="XP_019331067.1">
    <property type="nucleotide sequence ID" value="XM_019475522.1"/>
</dbReference>
<dbReference type="PDB" id="7PZY">
    <property type="method" value="EM"/>
    <property type="resolution" value="2.32 A"/>
    <property type="chains" value="AB=1-149"/>
</dbReference>
<dbReference type="PDB" id="7Q08">
    <property type="method" value="EM"/>
    <property type="resolution" value="2.56 A"/>
    <property type="chains" value="AB=1-149"/>
</dbReference>
<dbReference type="PDB" id="7Q0F">
    <property type="method" value="EM"/>
    <property type="resolution" value="2.64 A"/>
    <property type="chains" value="AB=1-149"/>
</dbReference>
<dbReference type="PDB" id="7Q0P">
    <property type="method" value="EM"/>
    <property type="resolution" value="2.77 A"/>
    <property type="chains" value="AB=1-149"/>
</dbReference>
<dbReference type="PDB" id="7Q0R">
    <property type="method" value="EM"/>
    <property type="resolution" value="2.67 A"/>
    <property type="chains" value="AB=1-149"/>
</dbReference>
<dbReference type="PDB" id="8C3A">
    <property type="method" value="X-ray"/>
    <property type="resolution" value="3.00 A"/>
    <property type="chains" value="AB/BV=1-149"/>
</dbReference>
<dbReference type="PDB" id="8OGJ">
    <property type="method" value="EM"/>
    <property type="resolution" value="3.10 A"/>
    <property type="chains" value="AB=1-149"/>
</dbReference>
<dbReference type="PDB" id="8OH6">
    <property type="method" value="X-ray"/>
    <property type="resolution" value="3.35 A"/>
    <property type="chains" value="AB/BV=1-149"/>
</dbReference>
<dbReference type="PDB" id="8OI5">
    <property type="method" value="X-ray"/>
    <property type="resolution" value="2.90 A"/>
    <property type="chains" value="AB/BV=1-149"/>
</dbReference>
<dbReference type="PDB" id="8OJ3">
    <property type="method" value="X-ray"/>
    <property type="resolution" value="3.50 A"/>
    <property type="chains" value="AB/BV=1-149"/>
</dbReference>
<dbReference type="PDBsum" id="7PZY"/>
<dbReference type="PDBsum" id="7Q08"/>
<dbReference type="PDBsum" id="7Q0F"/>
<dbReference type="PDBsum" id="7Q0P"/>
<dbReference type="PDBsum" id="7Q0R"/>
<dbReference type="PDBsum" id="8C3A"/>
<dbReference type="PDBsum" id="8OGJ"/>
<dbReference type="PDBsum" id="8OH6"/>
<dbReference type="PDBsum" id="8OI5"/>
<dbReference type="PDBsum" id="8OJ3"/>
<dbReference type="EMDB" id="EMD-13737"/>
<dbReference type="EMDB" id="EMD-13741"/>
<dbReference type="EMDB" id="EMD-13744"/>
<dbReference type="EMDB" id="EMD-13749"/>
<dbReference type="EMDB" id="EMD-13750"/>
<dbReference type="SMR" id="A0A1D8PSC5"/>
<dbReference type="FunCoup" id="A0A1D8PSC5">
    <property type="interactions" value="1059"/>
</dbReference>
<dbReference type="STRING" id="237561.A0A1D8PSC5"/>
<dbReference type="EnsemblFungi" id="CR_03030C_A-T">
    <property type="protein sequence ID" value="CR_03030C_A-T-p1"/>
    <property type="gene ID" value="CR_03030C_A"/>
</dbReference>
<dbReference type="GeneID" id="30515386"/>
<dbReference type="KEGG" id="cal:CAALFM_CR03030CA"/>
<dbReference type="CGD" id="CAL0000198266">
    <property type="gene designation" value="RPL28"/>
</dbReference>
<dbReference type="VEuPathDB" id="FungiDB:CR_03030C_A"/>
<dbReference type="eggNOG" id="KOG1742">
    <property type="taxonomic scope" value="Eukaryota"/>
</dbReference>
<dbReference type="InParanoid" id="A0A1D8PSC5"/>
<dbReference type="OMA" id="WGRVGQH"/>
<dbReference type="OrthoDB" id="61900at2759"/>
<dbReference type="Proteomes" id="UP000000559">
    <property type="component" value="Chromosome R"/>
</dbReference>
<dbReference type="GO" id="GO:0022625">
    <property type="term" value="C:cytosolic large ribosomal subunit"/>
    <property type="evidence" value="ECO:0000318"/>
    <property type="project" value="GO_Central"/>
</dbReference>
<dbReference type="GO" id="GO:0005634">
    <property type="term" value="C:nucleus"/>
    <property type="evidence" value="ECO:0007669"/>
    <property type="project" value="EnsemblFungi"/>
</dbReference>
<dbReference type="GO" id="GO:0003723">
    <property type="term" value="F:RNA binding"/>
    <property type="evidence" value="ECO:0007669"/>
    <property type="project" value="EnsemblFungi"/>
</dbReference>
<dbReference type="GO" id="GO:0003735">
    <property type="term" value="F:structural constituent of ribosome"/>
    <property type="evidence" value="ECO:0000318"/>
    <property type="project" value="GO_Central"/>
</dbReference>
<dbReference type="GO" id="GO:0006412">
    <property type="term" value="P:translation"/>
    <property type="evidence" value="ECO:0000303"/>
    <property type="project" value="CGD"/>
</dbReference>
<dbReference type="FunFam" id="3.100.10.10:FF:000002">
    <property type="entry name" value="60S ribosomal protein L27a"/>
    <property type="match status" value="1"/>
</dbReference>
<dbReference type="Gene3D" id="3.100.10.10">
    <property type="match status" value="1"/>
</dbReference>
<dbReference type="HAMAP" id="MF_01341">
    <property type="entry name" value="Ribosomal_uL15"/>
    <property type="match status" value="1"/>
</dbReference>
<dbReference type="InterPro" id="IPR030878">
    <property type="entry name" value="Ribosomal_uL15"/>
</dbReference>
<dbReference type="InterPro" id="IPR021131">
    <property type="entry name" value="Ribosomal_uL15/eL18"/>
</dbReference>
<dbReference type="InterPro" id="IPR036227">
    <property type="entry name" value="Ribosomal_uL15/eL18_sf"/>
</dbReference>
<dbReference type="InterPro" id="IPR001196">
    <property type="entry name" value="Ribosomal_uL15_CS"/>
</dbReference>
<dbReference type="PANTHER" id="PTHR11721">
    <property type="entry name" value="60S RIBOSOMAL PROTEIN L27A"/>
    <property type="match status" value="1"/>
</dbReference>
<dbReference type="PANTHER" id="PTHR11721:SF3">
    <property type="entry name" value="LARGE RIBOSOMAL SUBUNIT PROTEIN UL15"/>
    <property type="match status" value="1"/>
</dbReference>
<dbReference type="Pfam" id="PF00828">
    <property type="entry name" value="Ribosomal_L27A"/>
    <property type="match status" value="1"/>
</dbReference>
<dbReference type="SUPFAM" id="SSF52080">
    <property type="entry name" value="Ribosomal proteins L15p and L18e"/>
    <property type="match status" value="1"/>
</dbReference>
<dbReference type="PROSITE" id="PS00475">
    <property type="entry name" value="RIBOSOMAL_L15"/>
    <property type="match status" value="1"/>
</dbReference>
<proteinExistence type="evidence at protein level"/>
<protein>
    <recommendedName>
        <fullName evidence="3">Large ribosomal subunit protein uL15</fullName>
    </recommendedName>
    <alternativeName>
        <fullName>60S ribosomal protein L28</fullName>
    </alternativeName>
</protein>
<accession>A0A1D8PSC5</accession>